<feature type="chain" id="PRO_0000125130" description="Large ribosomal subunit protein uL22">
    <location>
        <begin position="1"/>
        <end position="110"/>
    </location>
</feature>
<sequence>METLAQHRQARSSAQKVRLIVDLIRGKKVPQALNILTYTNKKAAFLVKKVVESAVANAEHNDGADIDKLRIKKIFVNEGSTMKRMMPRAKGRADRILKRTSHITVIVSDR</sequence>
<proteinExistence type="inferred from homology"/>
<reference key="1">
    <citation type="journal article" date="2000" name="Nature">
        <title>Genome sequence of the endocellular bacterial symbiont of aphids Buchnera sp. APS.</title>
        <authorList>
            <person name="Shigenobu S."/>
            <person name="Watanabe H."/>
            <person name="Hattori M."/>
            <person name="Sakaki Y."/>
            <person name="Ishikawa H."/>
        </authorList>
    </citation>
    <scope>NUCLEOTIDE SEQUENCE [LARGE SCALE GENOMIC DNA]</scope>
    <source>
        <strain>APS</strain>
    </source>
</reference>
<name>RL22_BUCAI</name>
<evidence type="ECO:0000255" key="1">
    <source>
        <dbReference type="HAMAP-Rule" id="MF_01331"/>
    </source>
</evidence>
<evidence type="ECO:0000305" key="2"/>
<keyword id="KW-1185">Reference proteome</keyword>
<keyword id="KW-0687">Ribonucleoprotein</keyword>
<keyword id="KW-0689">Ribosomal protein</keyword>
<keyword id="KW-0694">RNA-binding</keyword>
<keyword id="KW-0699">rRNA-binding</keyword>
<dbReference type="EMBL" id="BA000003">
    <property type="protein sequence ID" value="BAB13212.1"/>
    <property type="molecule type" value="Genomic_DNA"/>
</dbReference>
<dbReference type="RefSeq" id="NP_240326.1">
    <property type="nucleotide sequence ID" value="NC_002528.1"/>
</dbReference>
<dbReference type="RefSeq" id="WP_009874470.1">
    <property type="nucleotide sequence ID" value="NZ_AP036055.1"/>
</dbReference>
<dbReference type="SMR" id="P57586"/>
<dbReference type="STRING" id="563178.BUAP5A_512"/>
<dbReference type="EnsemblBacteria" id="BAB13212">
    <property type="protein sequence ID" value="BAB13212"/>
    <property type="gene ID" value="BAB13212"/>
</dbReference>
<dbReference type="KEGG" id="buc:BU519"/>
<dbReference type="PATRIC" id="fig|107806.10.peg.524"/>
<dbReference type="eggNOG" id="COG0091">
    <property type="taxonomic scope" value="Bacteria"/>
</dbReference>
<dbReference type="HOGENOM" id="CLU_083987_3_3_6"/>
<dbReference type="Proteomes" id="UP000001806">
    <property type="component" value="Chromosome"/>
</dbReference>
<dbReference type="GO" id="GO:0022625">
    <property type="term" value="C:cytosolic large ribosomal subunit"/>
    <property type="evidence" value="ECO:0007669"/>
    <property type="project" value="TreeGrafter"/>
</dbReference>
<dbReference type="GO" id="GO:0019843">
    <property type="term" value="F:rRNA binding"/>
    <property type="evidence" value="ECO:0007669"/>
    <property type="project" value="UniProtKB-UniRule"/>
</dbReference>
<dbReference type="GO" id="GO:0003735">
    <property type="term" value="F:structural constituent of ribosome"/>
    <property type="evidence" value="ECO:0007669"/>
    <property type="project" value="InterPro"/>
</dbReference>
<dbReference type="GO" id="GO:0006412">
    <property type="term" value="P:translation"/>
    <property type="evidence" value="ECO:0007669"/>
    <property type="project" value="UniProtKB-UniRule"/>
</dbReference>
<dbReference type="CDD" id="cd00336">
    <property type="entry name" value="Ribosomal_L22"/>
    <property type="match status" value="1"/>
</dbReference>
<dbReference type="FunFam" id="3.90.470.10:FF:000001">
    <property type="entry name" value="50S ribosomal protein L22"/>
    <property type="match status" value="1"/>
</dbReference>
<dbReference type="Gene3D" id="3.90.470.10">
    <property type="entry name" value="Ribosomal protein L22/L17"/>
    <property type="match status" value="1"/>
</dbReference>
<dbReference type="HAMAP" id="MF_01331_B">
    <property type="entry name" value="Ribosomal_uL22_B"/>
    <property type="match status" value="1"/>
</dbReference>
<dbReference type="InterPro" id="IPR001063">
    <property type="entry name" value="Ribosomal_uL22"/>
</dbReference>
<dbReference type="InterPro" id="IPR005727">
    <property type="entry name" value="Ribosomal_uL22_bac/chlpt-type"/>
</dbReference>
<dbReference type="InterPro" id="IPR047867">
    <property type="entry name" value="Ribosomal_uL22_bac/org-type"/>
</dbReference>
<dbReference type="InterPro" id="IPR018260">
    <property type="entry name" value="Ribosomal_uL22_CS"/>
</dbReference>
<dbReference type="InterPro" id="IPR036394">
    <property type="entry name" value="Ribosomal_uL22_sf"/>
</dbReference>
<dbReference type="NCBIfam" id="TIGR01044">
    <property type="entry name" value="rplV_bact"/>
    <property type="match status" value="1"/>
</dbReference>
<dbReference type="PANTHER" id="PTHR13501">
    <property type="entry name" value="CHLOROPLAST 50S RIBOSOMAL PROTEIN L22-RELATED"/>
    <property type="match status" value="1"/>
</dbReference>
<dbReference type="PANTHER" id="PTHR13501:SF8">
    <property type="entry name" value="LARGE RIBOSOMAL SUBUNIT PROTEIN UL22M"/>
    <property type="match status" value="1"/>
</dbReference>
<dbReference type="Pfam" id="PF00237">
    <property type="entry name" value="Ribosomal_L22"/>
    <property type="match status" value="1"/>
</dbReference>
<dbReference type="SUPFAM" id="SSF54843">
    <property type="entry name" value="Ribosomal protein L22"/>
    <property type="match status" value="1"/>
</dbReference>
<dbReference type="PROSITE" id="PS00464">
    <property type="entry name" value="RIBOSOMAL_L22"/>
    <property type="match status" value="1"/>
</dbReference>
<protein>
    <recommendedName>
        <fullName evidence="1">Large ribosomal subunit protein uL22</fullName>
    </recommendedName>
    <alternativeName>
        <fullName evidence="2">50S ribosomal protein L22</fullName>
    </alternativeName>
</protein>
<organism>
    <name type="scientific">Buchnera aphidicola subsp. Acyrthosiphon pisum (strain APS)</name>
    <name type="common">Acyrthosiphon pisum symbiotic bacterium</name>
    <dbReference type="NCBI Taxonomy" id="107806"/>
    <lineage>
        <taxon>Bacteria</taxon>
        <taxon>Pseudomonadati</taxon>
        <taxon>Pseudomonadota</taxon>
        <taxon>Gammaproteobacteria</taxon>
        <taxon>Enterobacterales</taxon>
        <taxon>Erwiniaceae</taxon>
        <taxon>Buchnera</taxon>
    </lineage>
</organism>
<accession>P57586</accession>
<comment type="function">
    <text evidence="1">This protein binds specifically to 23S rRNA; its binding is stimulated by other ribosomal proteins, e.g. L4, L17, and L20. It is important during the early stages of 50S assembly. It makes multiple contacts with different domains of the 23S rRNA in the assembled 50S subunit and ribosome (By similarity).</text>
</comment>
<comment type="function">
    <text evidence="1">The globular domain of the protein is located near the polypeptide exit tunnel on the outside of the subunit, while an extended beta-hairpin is found that lines the wall of the exit tunnel in the center of the 70S ribosome.</text>
</comment>
<comment type="subunit">
    <text evidence="1">Part of the 50S ribosomal subunit.</text>
</comment>
<comment type="similarity">
    <text evidence="1">Belongs to the universal ribosomal protein uL22 family.</text>
</comment>
<gene>
    <name evidence="1" type="primary">rplV</name>
    <name type="ordered locus">BU519</name>
</gene>